<dbReference type="EMBL" id="CP000803">
    <property type="protein sequence ID" value="ABU60491.1"/>
    <property type="molecule type" value="Genomic_DNA"/>
</dbReference>
<dbReference type="SMR" id="A7N938"/>
<dbReference type="KEGG" id="fta:FTA_0013"/>
<dbReference type="HOGENOM" id="CLU_111574_1_0_6"/>
<dbReference type="GO" id="GO:0005737">
    <property type="term" value="C:cytoplasm"/>
    <property type="evidence" value="ECO:0007669"/>
    <property type="project" value="UniProtKB-SubCell"/>
</dbReference>
<dbReference type="GO" id="GO:0051082">
    <property type="term" value="F:unfolded protein binding"/>
    <property type="evidence" value="ECO:0007669"/>
    <property type="project" value="InterPro"/>
</dbReference>
<dbReference type="GO" id="GO:0006457">
    <property type="term" value="P:protein folding"/>
    <property type="evidence" value="ECO:0007669"/>
    <property type="project" value="UniProtKB-UniRule"/>
</dbReference>
<dbReference type="GO" id="GO:0051262">
    <property type="term" value="P:protein tetramerization"/>
    <property type="evidence" value="ECO:0007669"/>
    <property type="project" value="InterPro"/>
</dbReference>
<dbReference type="GO" id="GO:0015031">
    <property type="term" value="P:protein transport"/>
    <property type="evidence" value="ECO:0007669"/>
    <property type="project" value="UniProtKB-UniRule"/>
</dbReference>
<dbReference type="Gene3D" id="3.10.420.10">
    <property type="entry name" value="SecB-like"/>
    <property type="match status" value="1"/>
</dbReference>
<dbReference type="HAMAP" id="MF_00821">
    <property type="entry name" value="SecB"/>
    <property type="match status" value="1"/>
</dbReference>
<dbReference type="InterPro" id="IPR003708">
    <property type="entry name" value="SecB"/>
</dbReference>
<dbReference type="InterPro" id="IPR035958">
    <property type="entry name" value="SecB-like_sf"/>
</dbReference>
<dbReference type="NCBIfam" id="NF004393">
    <property type="entry name" value="PRK05751.1-4"/>
    <property type="match status" value="1"/>
</dbReference>
<dbReference type="NCBIfam" id="NF009590">
    <property type="entry name" value="PRK13031.1"/>
    <property type="match status" value="1"/>
</dbReference>
<dbReference type="NCBIfam" id="TIGR00809">
    <property type="entry name" value="secB"/>
    <property type="match status" value="1"/>
</dbReference>
<dbReference type="PANTHER" id="PTHR36918">
    <property type="match status" value="1"/>
</dbReference>
<dbReference type="PANTHER" id="PTHR36918:SF1">
    <property type="entry name" value="PROTEIN-EXPORT PROTEIN SECB"/>
    <property type="match status" value="1"/>
</dbReference>
<dbReference type="Pfam" id="PF02556">
    <property type="entry name" value="SecB"/>
    <property type="match status" value="1"/>
</dbReference>
<dbReference type="PRINTS" id="PR01594">
    <property type="entry name" value="SECBCHAPRONE"/>
</dbReference>
<dbReference type="SUPFAM" id="SSF54611">
    <property type="entry name" value="SecB-like"/>
    <property type="match status" value="1"/>
</dbReference>
<accession>A7N938</accession>
<organism>
    <name type="scientific">Francisella tularensis subsp. holarctica (strain FTNF002-00 / FTA)</name>
    <dbReference type="NCBI Taxonomy" id="458234"/>
    <lineage>
        <taxon>Bacteria</taxon>
        <taxon>Pseudomonadati</taxon>
        <taxon>Pseudomonadota</taxon>
        <taxon>Gammaproteobacteria</taxon>
        <taxon>Thiotrichales</taxon>
        <taxon>Francisellaceae</taxon>
        <taxon>Francisella</taxon>
    </lineage>
</organism>
<protein>
    <recommendedName>
        <fullName evidence="1">Protein-export protein SecB 1</fullName>
    </recommendedName>
</protein>
<name>SECB1_FRATF</name>
<reference key="1">
    <citation type="journal article" date="2009" name="PLoS ONE">
        <title>Complete genome sequence of Francisella tularensis subspecies holarctica FTNF002-00.</title>
        <authorList>
            <person name="Barabote R.D."/>
            <person name="Xie G."/>
            <person name="Brettin T.S."/>
            <person name="Hinrichs S.H."/>
            <person name="Fey P.D."/>
            <person name="Jay J.J."/>
            <person name="Engle J.L."/>
            <person name="Godbole S.D."/>
            <person name="Noronha J.M."/>
            <person name="Scheuermann R.H."/>
            <person name="Zhou L.W."/>
            <person name="Lion C."/>
            <person name="Dempsey M.P."/>
        </authorList>
    </citation>
    <scope>NUCLEOTIDE SEQUENCE [LARGE SCALE GENOMIC DNA]</scope>
    <source>
        <strain>FTNF002-00 / FTA</strain>
    </source>
</reference>
<sequence length="149" mass="16900">MDQQAQPQFQIQKVYVKDLSFSIPNSDKIWTTNWKPELHTDLKVEATKLPEENTYETVLTLEVKVENDGMVAFEAEVKQAGIFTVANMQEAQIEHAKKAFCPNILYHYAREAISDLVISGGFPQLCLSAVNFDAMYQDSLKESADSKQH</sequence>
<feature type="chain" id="PRO_0000318227" description="Protein-export protein SecB 1">
    <location>
        <begin position="1"/>
        <end position="149"/>
    </location>
</feature>
<keyword id="KW-0143">Chaperone</keyword>
<keyword id="KW-0963">Cytoplasm</keyword>
<keyword id="KW-0653">Protein transport</keyword>
<keyword id="KW-0811">Translocation</keyword>
<keyword id="KW-0813">Transport</keyword>
<proteinExistence type="inferred from homology"/>
<gene>
    <name evidence="1" type="primary">secB1</name>
    <name type="ordered locus">FTA_0013</name>
</gene>
<comment type="function">
    <text evidence="1">One of the proteins required for the normal export of preproteins out of the cell cytoplasm. It is a molecular chaperone that binds to a subset of precursor proteins, maintaining them in a translocation-competent state. It also specifically binds to its receptor SecA.</text>
</comment>
<comment type="subunit">
    <text evidence="1">Homotetramer, a dimer of dimers. One homotetramer interacts with 1 SecA dimer.</text>
</comment>
<comment type="subcellular location">
    <subcellularLocation>
        <location evidence="1">Cytoplasm</location>
    </subcellularLocation>
</comment>
<comment type="similarity">
    <text evidence="1">Belongs to the SecB family.</text>
</comment>
<evidence type="ECO:0000255" key="1">
    <source>
        <dbReference type="HAMAP-Rule" id="MF_00821"/>
    </source>
</evidence>